<sequence>MSVCTEIDYKLYTELRKIAGNSLFLFNEDGDFVEVVSNSSFKFLLPVGLFSSMDIPLKKPIECNTDNDIEHSKNVVMPNLYPFQERVASEVLSSIKKKVELKRPMYVTLHLACGFGKTITTCYLLSVHKKKAVICLPNKMLINQWKRAIESININHLVSVDGVGNLLKELVKKPADILIIVSRHLSNKEFCKKIHVDYDVFVLDESHMYNLMNNSTVTRFLTYYPPKICYFLTATPRRVNRIYCNDVINVSNSSDLKKYIKIVEFFFETYSSDTIRQMVKKLNTNYNKYHMYTEKILAEDVPRNKLILDTIIYDFEKMIVNRLIIVTKLRKHMMFFYTNLIEKFGSDIVYLGDAKNKNISDIVKKIKSINRFIFISTTNYSGTGLDVPTLDSLVICSAVMNSMQIEQILGRICRYSISKTRTVIVFPNTSIKEIKHMIGFFTQKIITLAIEKLGFKKIDKKGNKQEFALCKAFNLQTR</sequence>
<accession>Q6TUQ9</accession>
<proteinExistence type="inferred from homology"/>
<comment type="function">
    <text evidence="1">DNA helicase which seems to act as a postreplicative transcription termination factor. Involved in ATP-dependent release of nascent RNA. Forms a stable complex with single-stranded DNA, and to a lesser extent RNA (By similarity).</text>
</comment>
<comment type="subunit">
    <text evidence="1">Interacts with G2. Might be part of a transcription complex composed at least of G2, A18, and H5.</text>
</comment>
<comment type="subcellular location">
    <subcellularLocation>
        <location evidence="1">Virion</location>
    </subcellularLocation>
    <text evidence="1">Localizes to the virion core.</text>
</comment>
<comment type="similarity">
    <text evidence="4">Belongs to the helicase family. Poxviruses subfamily.</text>
</comment>
<protein>
    <recommendedName>
        <fullName>Transcript termination protein A18</fullName>
        <ecNumber>3.6.4.-</ecNumber>
    </recommendedName>
</protein>
<evidence type="ECO:0000250" key="1"/>
<evidence type="ECO:0000255" key="2">
    <source>
        <dbReference type="PROSITE-ProRule" id="PRU00541"/>
    </source>
</evidence>
<evidence type="ECO:0000255" key="3">
    <source>
        <dbReference type="PROSITE-ProRule" id="PRU00542"/>
    </source>
</evidence>
<evidence type="ECO:0000305" key="4"/>
<keyword id="KW-0067">ATP-binding</keyword>
<keyword id="KW-0238">DNA-binding</keyword>
<keyword id="KW-0347">Helicase</keyword>
<keyword id="KW-0378">Hydrolase</keyword>
<keyword id="KW-0426">Late protein</keyword>
<keyword id="KW-0547">Nucleotide-binding</keyword>
<keyword id="KW-1185">Reference proteome</keyword>
<keyword id="KW-0804">Transcription</keyword>
<keyword id="KW-0946">Virion</keyword>
<gene>
    <name type="ordered locus">110R</name>
</gene>
<feature type="chain" id="PRO_0000102190" description="Transcript termination protein A18">
    <location>
        <begin position="1"/>
        <end position="478"/>
    </location>
</feature>
<feature type="domain" description="Helicase ATP-binding" evidence="2">
    <location>
        <begin position="98"/>
        <end position="254"/>
    </location>
</feature>
<feature type="domain" description="Helicase C-terminal" evidence="3">
    <location>
        <begin position="307"/>
        <end position="454"/>
    </location>
</feature>
<feature type="short sequence motif" description="DESH box">
    <location>
        <begin position="204"/>
        <end position="207"/>
    </location>
</feature>
<feature type="binding site" evidence="2">
    <location>
        <begin position="111"/>
        <end position="118"/>
    </location>
    <ligand>
        <name>ATP</name>
        <dbReference type="ChEBI" id="CHEBI:30616"/>
    </ligand>
</feature>
<organismHost>
    <name type="scientific">Erythrocebus patas</name>
    <name type="common">Red guenon</name>
    <name type="synonym">Cercopithecus patas</name>
    <dbReference type="NCBI Taxonomy" id="9538"/>
</organismHost>
<organismHost>
    <name type="scientific">Homo sapiens</name>
    <name type="common">Human</name>
    <dbReference type="NCBI Taxonomy" id="9606"/>
</organismHost>
<organismHost>
    <name type="scientific">Macaca</name>
    <name type="common">macaques</name>
    <dbReference type="NCBI Taxonomy" id="9539"/>
</organismHost>
<organismHost>
    <name type="scientific">Papio hamadryas</name>
    <name type="common">Hamadryas baboon</name>
    <dbReference type="NCBI Taxonomy" id="9557"/>
</organismHost>
<organism>
    <name type="scientific">Yaba monkey tumor virus (strain VR587)</name>
    <name type="common">YMTV</name>
    <dbReference type="NCBI Taxonomy" id="928314"/>
    <lineage>
        <taxon>Viruses</taxon>
        <taxon>Varidnaviria</taxon>
        <taxon>Bamfordvirae</taxon>
        <taxon>Nucleocytoviricota</taxon>
        <taxon>Pokkesviricetes</taxon>
        <taxon>Chitovirales</taxon>
        <taxon>Poxviridae</taxon>
        <taxon>Chordopoxvirinae</taxon>
        <taxon>Yatapoxvirus</taxon>
        <taxon>Yaba monkey tumor virus</taxon>
    </lineage>
</organism>
<dbReference type="EC" id="3.6.4.-"/>
<dbReference type="EMBL" id="AY386371">
    <property type="protein sequence ID" value="AAR07466.1"/>
    <property type="molecule type" value="Genomic_DNA"/>
</dbReference>
<dbReference type="RefSeq" id="NP_938365.1">
    <property type="nucleotide sequence ID" value="NC_005179.1"/>
</dbReference>
<dbReference type="KEGG" id="vg:2943580"/>
<dbReference type="Proteomes" id="UP000008596">
    <property type="component" value="Segment"/>
</dbReference>
<dbReference type="GO" id="GO:0097550">
    <property type="term" value="C:transcription preinitiation complex"/>
    <property type="evidence" value="ECO:0007669"/>
    <property type="project" value="TreeGrafter"/>
</dbReference>
<dbReference type="GO" id="GO:0044423">
    <property type="term" value="C:virion component"/>
    <property type="evidence" value="ECO:0007669"/>
    <property type="project" value="UniProtKB-KW"/>
</dbReference>
<dbReference type="GO" id="GO:0043138">
    <property type="term" value="F:3'-5' DNA helicase activity"/>
    <property type="evidence" value="ECO:0007669"/>
    <property type="project" value="TreeGrafter"/>
</dbReference>
<dbReference type="GO" id="GO:0005524">
    <property type="term" value="F:ATP binding"/>
    <property type="evidence" value="ECO:0007669"/>
    <property type="project" value="UniProtKB-KW"/>
</dbReference>
<dbReference type="GO" id="GO:0003677">
    <property type="term" value="F:DNA binding"/>
    <property type="evidence" value="ECO:0007669"/>
    <property type="project" value="UniProtKB-KW"/>
</dbReference>
<dbReference type="GO" id="GO:0016787">
    <property type="term" value="F:hydrolase activity"/>
    <property type="evidence" value="ECO:0007669"/>
    <property type="project" value="UniProtKB-KW"/>
</dbReference>
<dbReference type="GO" id="GO:0006367">
    <property type="term" value="P:transcription initiation at RNA polymerase II promoter"/>
    <property type="evidence" value="ECO:0007669"/>
    <property type="project" value="TreeGrafter"/>
</dbReference>
<dbReference type="CDD" id="cd18785">
    <property type="entry name" value="SF2_C"/>
    <property type="match status" value="1"/>
</dbReference>
<dbReference type="Gene3D" id="3.40.50.300">
    <property type="entry name" value="P-loop containing nucleotide triphosphate hydrolases"/>
    <property type="match status" value="2"/>
</dbReference>
<dbReference type="InterPro" id="IPR050615">
    <property type="entry name" value="ATP-dep_DNA_Helicase"/>
</dbReference>
<dbReference type="InterPro" id="IPR006935">
    <property type="entry name" value="Helicase/UvrB_N"/>
</dbReference>
<dbReference type="InterPro" id="IPR014001">
    <property type="entry name" value="Helicase_ATP-bd"/>
</dbReference>
<dbReference type="InterPro" id="IPR001650">
    <property type="entry name" value="Helicase_C-like"/>
</dbReference>
<dbReference type="InterPro" id="IPR027417">
    <property type="entry name" value="P-loop_NTPase"/>
</dbReference>
<dbReference type="PANTHER" id="PTHR11274:SF13">
    <property type="entry name" value="HELICASE A859L-RELATED"/>
    <property type="match status" value="1"/>
</dbReference>
<dbReference type="PANTHER" id="PTHR11274">
    <property type="entry name" value="RAD25/XP-B DNA REPAIR HELICASE"/>
    <property type="match status" value="1"/>
</dbReference>
<dbReference type="Pfam" id="PF00271">
    <property type="entry name" value="Helicase_C"/>
    <property type="match status" value="1"/>
</dbReference>
<dbReference type="Pfam" id="PF04851">
    <property type="entry name" value="ResIII"/>
    <property type="match status" value="1"/>
</dbReference>
<dbReference type="SMART" id="SM00487">
    <property type="entry name" value="DEXDc"/>
    <property type="match status" value="1"/>
</dbReference>
<dbReference type="SUPFAM" id="SSF52540">
    <property type="entry name" value="P-loop containing nucleoside triphosphate hydrolases"/>
    <property type="match status" value="1"/>
</dbReference>
<dbReference type="PROSITE" id="PS51192">
    <property type="entry name" value="HELICASE_ATP_BIND_1"/>
    <property type="match status" value="1"/>
</dbReference>
<dbReference type="PROSITE" id="PS51194">
    <property type="entry name" value="HELICASE_CTER"/>
    <property type="match status" value="1"/>
</dbReference>
<reference key="1">
    <citation type="journal article" date="2003" name="J. Virol.">
        <title>Complete genomic sequence and comparative analysis of the tumorigenic poxvirus Yaba monkey tumor virus.</title>
        <authorList>
            <person name="Brunetti C.R."/>
            <person name="Amano H."/>
            <person name="Ueda Y."/>
            <person name="Qin J."/>
            <person name="Miyamura T."/>
            <person name="Suzuki T."/>
            <person name="Li X."/>
            <person name="Barrett J.W."/>
            <person name="McFadden G."/>
        </authorList>
    </citation>
    <scope>NUCLEOTIDE SEQUENCE [LARGE SCALE GENOMIC DNA]</scope>
</reference>
<name>A18_YMTV5</name>